<gene>
    <name evidence="5" type="primary">YTH2</name>
    <name type="ORF">MGG_00637</name>
</gene>
<organism>
    <name type="scientific">Pyricularia oryzae (strain 70-15 / ATCC MYA-4617 / FGSC 8958)</name>
    <name type="common">Rice blast fungus</name>
    <name type="synonym">Magnaporthe oryzae</name>
    <dbReference type="NCBI Taxonomy" id="242507"/>
    <lineage>
        <taxon>Eukaryota</taxon>
        <taxon>Fungi</taxon>
        <taxon>Dikarya</taxon>
        <taxon>Ascomycota</taxon>
        <taxon>Pezizomycotina</taxon>
        <taxon>Sordariomycetes</taxon>
        <taxon>Sordariomycetidae</taxon>
        <taxon>Magnaporthales</taxon>
        <taxon>Pyriculariaceae</taxon>
        <taxon>Pyricularia</taxon>
    </lineage>
</organism>
<proteinExistence type="inferred from homology"/>
<evidence type="ECO:0000250" key="1">
    <source>
        <dbReference type="UniProtKB" id="A0A9P4XWM4"/>
    </source>
</evidence>
<evidence type="ECO:0000255" key="2">
    <source>
        <dbReference type="PROSITE-ProRule" id="PRU00225"/>
    </source>
</evidence>
<evidence type="ECO:0000256" key="3">
    <source>
        <dbReference type="SAM" id="MobiDB-lite"/>
    </source>
</evidence>
<evidence type="ECO:0000269" key="4">
    <source>
    </source>
</evidence>
<evidence type="ECO:0000303" key="5">
    <source>
    </source>
</evidence>
<evidence type="ECO:0000305" key="6"/>
<dbReference type="EMBL" id="CM001235">
    <property type="protein sequence ID" value="EHA48795.1"/>
    <property type="molecule type" value="Genomic_DNA"/>
</dbReference>
<dbReference type="RefSeq" id="XP_003718379.1">
    <property type="nucleotide sequence ID" value="XM_003718331.1"/>
</dbReference>
<dbReference type="EnsemblFungi" id="MGG_00637T0">
    <property type="protein sequence ID" value="MGG_00637T0"/>
    <property type="gene ID" value="MGG_00637"/>
</dbReference>
<dbReference type="GeneID" id="2674170"/>
<dbReference type="KEGG" id="mgr:MGG_00637"/>
<dbReference type="VEuPathDB" id="FungiDB:MGG_00637"/>
<dbReference type="HOGENOM" id="CLU_465448_0_0_1"/>
<dbReference type="InParanoid" id="G4NB33"/>
<dbReference type="OrthoDB" id="230742at2759"/>
<dbReference type="PHI-base" id="PHI:8651"/>
<dbReference type="Proteomes" id="UP000009058">
    <property type="component" value="Chromosome 5"/>
</dbReference>
<dbReference type="GO" id="GO:0003723">
    <property type="term" value="F:RNA binding"/>
    <property type="evidence" value="ECO:0007669"/>
    <property type="project" value="InterPro"/>
</dbReference>
<dbReference type="Gene3D" id="3.10.590.10">
    <property type="entry name" value="ph1033 like domains"/>
    <property type="match status" value="1"/>
</dbReference>
<dbReference type="InterPro" id="IPR007275">
    <property type="entry name" value="YTH_domain"/>
</dbReference>
<dbReference type="Pfam" id="PF04146">
    <property type="entry name" value="YTH"/>
    <property type="match status" value="1"/>
</dbReference>
<dbReference type="PROSITE" id="PS50882">
    <property type="entry name" value="YTH"/>
    <property type="match status" value="1"/>
</dbReference>
<sequence length="586" mass="65389">MWPNLFWGFDAYDGSNFNAFPIYFPTEFMQTEPRDQSSCQQLSMEQATEPSMNPDQEDIVEGGENYGELSNQQETVPSFENADQNLSRLEMSTLARELKEKVKQSRALRQSVNNAAEQQPSTKPQPVQQEVQDLINDILKSQDQDDNLKNPSKLTGPQDDTETEKPASTLPTTPRTIKESPLSTYSIPVYCPASPEGRTHIPDEILDNAPKGPRHTHRGQVQMFCNGECGRRETDKAMPAIEPSDKTEETEGATAVRIPPVATDGDLEQDVIMWLRHTGFYDKAKRTDALARWKQLAKMEQGLARPQQDHQEAGVALASASQGSKEAGMGTRPGPDADCPPVCRPEQGGPGSSQAALSCKSKQSTDIQRATLAETRGGSLRDRAANQQPSKKSDRGRCARRHRSSSPRGRSGSHKSRRATTDSPVSRSTTKSTPSRARQPGHRDYREYRDDRNRDTKPRSPLVSCRAAVAFNPGVKGAPLVRQRFRPRQTNTDLQHKARIVGAPPRDMESNIKERQNHDPERQSGQFGIRWLCTSPLALQNTKSLRNSFDDLKPVLLGRDGQEMDDYCGRDLLRLMDASERGLHRP</sequence>
<keyword id="KW-1185">Reference proteome</keyword>
<comment type="function">
    <text evidence="1 4">Specifically recognizes and binds N6-methyladenosine (m6A)-containing mRNAs, and regulates their stability (By similarity). M6A is a modification present at internal sites of mRNAs and some non-coding RNAs and plays a role in mRNA stability and processing (By similarity). Plays a role in pathogenicity towards plant host (PubMed:30535195).</text>
</comment>
<comment type="disruption phenotype">
    <text evidence="4">Does not seem to affect growth but produces fewer conidiophores, as well as fewer spores on each conidiophore (PubMed:30535195). Displays milder disease lesions on rice leaves (PubMed:30535195).</text>
</comment>
<comment type="similarity">
    <text evidence="6">Belongs to the YTHDF family. YTHDF1 subfamily.</text>
</comment>
<feature type="chain" id="PRO_0000462152" description="YTH domain-containing family protein 2">
    <location>
        <begin position="1"/>
        <end position="586"/>
    </location>
</feature>
<feature type="domain" description="YTH" evidence="2">
    <location>
        <begin position="435"/>
        <end position="576"/>
    </location>
</feature>
<feature type="region of interest" description="Disordered" evidence="3">
    <location>
        <begin position="98"/>
        <end position="128"/>
    </location>
</feature>
<feature type="region of interest" description="Disordered" evidence="3">
    <location>
        <begin position="141"/>
        <end position="181"/>
    </location>
</feature>
<feature type="region of interest" description="Disordered" evidence="3">
    <location>
        <begin position="301"/>
        <end position="464"/>
    </location>
</feature>
<feature type="compositionally biased region" description="Polar residues" evidence="3">
    <location>
        <begin position="107"/>
        <end position="128"/>
    </location>
</feature>
<feature type="compositionally biased region" description="Polar residues" evidence="3">
    <location>
        <begin position="169"/>
        <end position="181"/>
    </location>
</feature>
<feature type="compositionally biased region" description="Polar residues" evidence="3">
    <location>
        <begin position="352"/>
        <end position="368"/>
    </location>
</feature>
<feature type="compositionally biased region" description="Basic residues" evidence="3">
    <location>
        <begin position="398"/>
        <end position="418"/>
    </location>
</feature>
<feature type="compositionally biased region" description="Polar residues" evidence="3">
    <location>
        <begin position="421"/>
        <end position="436"/>
    </location>
</feature>
<feature type="compositionally biased region" description="Basic and acidic residues" evidence="3">
    <location>
        <begin position="441"/>
        <end position="458"/>
    </location>
</feature>
<name>YTH2_PYRO7</name>
<accession>G4NB33</accession>
<protein>
    <recommendedName>
        <fullName evidence="5">YTH domain-containing family protein 2</fullName>
    </recommendedName>
    <alternativeName>
        <fullName evidence="6">M6A reader YTH2</fullName>
    </alternativeName>
</protein>
<reference key="1">
    <citation type="journal article" date="2005" name="Nature">
        <title>The genome sequence of the rice blast fungus Magnaporthe grisea.</title>
        <authorList>
            <person name="Dean R.A."/>
            <person name="Talbot N.J."/>
            <person name="Ebbole D.J."/>
            <person name="Farman M.L."/>
            <person name="Mitchell T.K."/>
            <person name="Orbach M.J."/>
            <person name="Thon M.R."/>
            <person name="Kulkarni R."/>
            <person name="Xu J.-R."/>
            <person name="Pan H."/>
            <person name="Read N.D."/>
            <person name="Lee Y.-H."/>
            <person name="Carbone I."/>
            <person name="Brown D."/>
            <person name="Oh Y.Y."/>
            <person name="Donofrio N."/>
            <person name="Jeong J.S."/>
            <person name="Soanes D.M."/>
            <person name="Djonovic S."/>
            <person name="Kolomiets E."/>
            <person name="Rehmeyer C."/>
            <person name="Li W."/>
            <person name="Harding M."/>
            <person name="Kim S."/>
            <person name="Lebrun M.-H."/>
            <person name="Bohnert H."/>
            <person name="Coughlan S."/>
            <person name="Butler J."/>
            <person name="Calvo S.E."/>
            <person name="Ma L.-J."/>
            <person name="Nicol R."/>
            <person name="Purcell S."/>
            <person name="Nusbaum C."/>
            <person name="Galagan J.E."/>
            <person name="Birren B.W."/>
        </authorList>
    </citation>
    <scope>NUCLEOTIDE SEQUENCE [LARGE SCALE GENOMIC DNA]</scope>
    <source>
        <strain>70-15 / ATCC MYA-4617 / FGSC 8958</strain>
    </source>
</reference>
<reference key="2">
    <citation type="journal article" date="2019" name="FEMS Microbiol. Lett.">
        <title>N6-methyladenosine RNA methylation is involved in virulence of the rice blast fungus Pyricularia oryzae (syn. Magnaporthe oryzae).</title>
        <authorList>
            <person name="Shi Y."/>
            <person name="Wang H."/>
            <person name="Wang J."/>
            <person name="Liu X."/>
            <person name="Lin F."/>
            <person name="Lu J."/>
        </authorList>
    </citation>
    <scope>FUNCTION</scope>
    <scope>DISRUPTION PHENOTYPE</scope>
</reference>